<feature type="chain" id="PRO_0000445558" description="Protein diaphanous homolog 3">
    <location>
        <begin position="1"/>
        <end position="1172"/>
    </location>
</feature>
<feature type="domain" description="GBD/FH3" evidence="5">
    <location>
        <begin position="94"/>
        <end position="456"/>
    </location>
</feature>
<feature type="domain" description="FH1" evidence="2">
    <location>
        <begin position="541"/>
        <end position="611"/>
    </location>
</feature>
<feature type="domain" description="FH2" evidence="6">
    <location>
        <begin position="616"/>
        <end position="1014"/>
    </location>
</feature>
<feature type="domain" description="DAD" evidence="4">
    <location>
        <begin position="1037"/>
        <end position="1067"/>
    </location>
</feature>
<feature type="region of interest" description="Disordered" evidence="7">
    <location>
        <begin position="1"/>
        <end position="36"/>
    </location>
</feature>
<feature type="region of interest" description="Disordered" evidence="7">
    <location>
        <begin position="57"/>
        <end position="96"/>
    </location>
</feature>
<feature type="region of interest" description="Disordered" evidence="7">
    <location>
        <begin position="535"/>
        <end position="586"/>
    </location>
</feature>
<feature type="coiled-coil region" evidence="3">
    <location>
        <begin position="493"/>
        <end position="530"/>
    </location>
</feature>
<feature type="short sequence motif" description="Nuclear localization signal" evidence="2">
    <location>
        <begin position="16"/>
        <end position="39"/>
    </location>
</feature>
<feature type="short sequence motif" description="Nuclear export signal" evidence="2">
    <location>
        <begin position="1163"/>
        <end position="1172"/>
    </location>
</feature>
<feature type="compositionally biased region" description="Basic and acidic residues" evidence="7">
    <location>
        <begin position="1"/>
        <end position="15"/>
    </location>
</feature>
<feature type="compositionally biased region" description="Low complexity" evidence="7">
    <location>
        <begin position="77"/>
        <end position="87"/>
    </location>
</feature>
<feature type="compositionally biased region" description="Pro residues" evidence="7">
    <location>
        <begin position="553"/>
        <end position="581"/>
    </location>
</feature>
<feature type="modified residue" description="Phosphothreonine" evidence="1">
    <location>
        <position position="47"/>
    </location>
</feature>
<feature type="modified residue" description="Phosphoserine" evidence="1">
    <location>
        <position position="56"/>
    </location>
</feature>
<feature type="modified residue" description="Phosphoserine" evidence="1">
    <location>
        <position position="155"/>
    </location>
</feature>
<feature type="modified residue" description="Phosphoserine" evidence="1">
    <location>
        <position position="1073"/>
    </location>
</feature>
<feature type="modified residue" description="Phosphoserine" evidence="1">
    <location>
        <position position="1158"/>
    </location>
</feature>
<keyword id="KW-0175">Coiled coil</keyword>
<keyword id="KW-0963">Cytoplasm</keyword>
<keyword id="KW-0539">Nucleus</keyword>
<keyword id="KW-0597">Phosphoprotein</keyword>
<keyword id="KW-1185">Reference proteome</keyword>
<keyword id="KW-0677">Repeat</keyword>
<keyword id="KW-0832">Ubl conjugation</keyword>
<gene>
    <name evidence="11" type="primary">Diaph3</name>
</gene>
<proteinExistence type="evidence at protein level"/>
<reference key="1">
    <citation type="journal article" date="2004" name="Nature">
        <title>Genome sequence of the Brown Norway rat yields insights into mammalian evolution.</title>
        <authorList>
            <person name="Gibbs R.A."/>
            <person name="Weinstock G.M."/>
            <person name="Metzker M.L."/>
            <person name="Muzny D.M."/>
            <person name="Sodergren E.J."/>
            <person name="Scherer S."/>
            <person name="Scott G."/>
            <person name="Steffen D."/>
            <person name="Worley K.C."/>
            <person name="Burch P.E."/>
            <person name="Okwuonu G."/>
            <person name="Hines S."/>
            <person name="Lewis L."/>
            <person name="Deramo C."/>
            <person name="Delgado O."/>
            <person name="Dugan-Rocha S."/>
            <person name="Miner G."/>
            <person name="Morgan M."/>
            <person name="Hawes A."/>
            <person name="Gill R."/>
            <person name="Holt R.A."/>
            <person name="Adams M.D."/>
            <person name="Amanatides P.G."/>
            <person name="Baden-Tillson H."/>
            <person name="Barnstead M."/>
            <person name="Chin S."/>
            <person name="Evans C.A."/>
            <person name="Ferriera S."/>
            <person name="Fosler C."/>
            <person name="Glodek A."/>
            <person name="Gu Z."/>
            <person name="Jennings D."/>
            <person name="Kraft C.L."/>
            <person name="Nguyen T."/>
            <person name="Pfannkoch C.M."/>
            <person name="Sitter C."/>
            <person name="Sutton G.G."/>
            <person name="Venter J.C."/>
            <person name="Woodage T."/>
            <person name="Smith D."/>
            <person name="Lee H.-M."/>
            <person name="Gustafson E."/>
            <person name="Cahill P."/>
            <person name="Kana A."/>
            <person name="Doucette-Stamm L."/>
            <person name="Weinstock K."/>
            <person name="Fechtel K."/>
            <person name="Weiss R.B."/>
            <person name="Dunn D.M."/>
            <person name="Green E.D."/>
            <person name="Blakesley R.W."/>
            <person name="Bouffard G.G."/>
            <person name="De Jong P.J."/>
            <person name="Osoegawa K."/>
            <person name="Zhu B."/>
            <person name="Marra M."/>
            <person name="Schein J."/>
            <person name="Bosdet I."/>
            <person name="Fjell C."/>
            <person name="Jones S."/>
            <person name="Krzywinski M."/>
            <person name="Mathewson C."/>
            <person name="Siddiqui A."/>
            <person name="Wye N."/>
            <person name="McPherson J."/>
            <person name="Zhao S."/>
            <person name="Fraser C.M."/>
            <person name="Shetty J."/>
            <person name="Shatsman S."/>
            <person name="Geer K."/>
            <person name="Chen Y."/>
            <person name="Abramzon S."/>
            <person name="Nierman W.C."/>
            <person name="Havlak P.H."/>
            <person name="Chen R."/>
            <person name="Durbin K.J."/>
            <person name="Egan A."/>
            <person name="Ren Y."/>
            <person name="Song X.-Z."/>
            <person name="Li B."/>
            <person name="Liu Y."/>
            <person name="Qin X."/>
            <person name="Cawley S."/>
            <person name="Cooney A.J."/>
            <person name="D'Souza L.M."/>
            <person name="Martin K."/>
            <person name="Wu J.Q."/>
            <person name="Gonzalez-Garay M.L."/>
            <person name="Jackson A.R."/>
            <person name="Kalafus K.J."/>
            <person name="McLeod M.P."/>
            <person name="Milosavljevic A."/>
            <person name="Virk D."/>
            <person name="Volkov A."/>
            <person name="Wheeler D.A."/>
            <person name="Zhang Z."/>
            <person name="Bailey J.A."/>
            <person name="Eichler E.E."/>
            <person name="Tuzun E."/>
            <person name="Birney E."/>
            <person name="Mongin E."/>
            <person name="Ureta-Vidal A."/>
            <person name="Woodwark C."/>
            <person name="Zdobnov E."/>
            <person name="Bork P."/>
            <person name="Suyama M."/>
            <person name="Torrents D."/>
            <person name="Alexandersson M."/>
            <person name="Trask B.J."/>
            <person name="Young J.M."/>
            <person name="Huang H."/>
            <person name="Wang H."/>
            <person name="Xing H."/>
            <person name="Daniels S."/>
            <person name="Gietzen D."/>
            <person name="Schmidt J."/>
            <person name="Stevens K."/>
            <person name="Vitt U."/>
            <person name="Wingrove J."/>
            <person name="Camara F."/>
            <person name="Mar Alba M."/>
            <person name="Abril J.F."/>
            <person name="Guigo R."/>
            <person name="Smit A."/>
            <person name="Dubchak I."/>
            <person name="Rubin E.M."/>
            <person name="Couronne O."/>
            <person name="Poliakov A."/>
            <person name="Huebner N."/>
            <person name="Ganten D."/>
            <person name="Goesele C."/>
            <person name="Hummel O."/>
            <person name="Kreitler T."/>
            <person name="Lee Y.-A."/>
            <person name="Monti J."/>
            <person name="Schulz H."/>
            <person name="Zimdahl H."/>
            <person name="Himmelbauer H."/>
            <person name="Lehrach H."/>
            <person name="Jacob H.J."/>
            <person name="Bromberg S."/>
            <person name="Gullings-Handley J."/>
            <person name="Jensen-Seaman M.I."/>
            <person name="Kwitek A.E."/>
            <person name="Lazar J."/>
            <person name="Pasko D."/>
            <person name="Tonellato P.J."/>
            <person name="Twigger S."/>
            <person name="Ponting C.P."/>
            <person name="Duarte J.M."/>
            <person name="Rice S."/>
            <person name="Goodstadt L."/>
            <person name="Beatson S.A."/>
            <person name="Emes R.D."/>
            <person name="Winter E.E."/>
            <person name="Webber C."/>
            <person name="Brandt P."/>
            <person name="Nyakatura G."/>
            <person name="Adetobi M."/>
            <person name="Chiaromonte F."/>
            <person name="Elnitski L."/>
            <person name="Eswara P."/>
            <person name="Hardison R.C."/>
            <person name="Hou M."/>
            <person name="Kolbe D."/>
            <person name="Makova K."/>
            <person name="Miller W."/>
            <person name="Nekrutenko A."/>
            <person name="Riemer C."/>
            <person name="Schwartz S."/>
            <person name="Taylor J."/>
            <person name="Yang S."/>
            <person name="Zhang Y."/>
            <person name="Lindpaintner K."/>
            <person name="Andrews T.D."/>
            <person name="Caccamo M."/>
            <person name="Clamp M."/>
            <person name="Clarke L."/>
            <person name="Curwen V."/>
            <person name="Durbin R.M."/>
            <person name="Eyras E."/>
            <person name="Searle S.M."/>
            <person name="Cooper G.M."/>
            <person name="Batzoglou S."/>
            <person name="Brudno M."/>
            <person name="Sidow A."/>
            <person name="Stone E.A."/>
            <person name="Payseur B.A."/>
            <person name="Bourque G."/>
            <person name="Lopez-Otin C."/>
            <person name="Puente X.S."/>
            <person name="Chakrabarti K."/>
            <person name="Chatterji S."/>
            <person name="Dewey C."/>
            <person name="Pachter L."/>
            <person name="Bray N."/>
            <person name="Yap V.B."/>
            <person name="Caspi A."/>
            <person name="Tesler G."/>
            <person name="Pevzner P.A."/>
            <person name="Haussler D."/>
            <person name="Roskin K.M."/>
            <person name="Baertsch R."/>
            <person name="Clawson H."/>
            <person name="Furey T.S."/>
            <person name="Hinrichs A.S."/>
            <person name="Karolchik D."/>
            <person name="Kent W.J."/>
            <person name="Rosenbloom K.R."/>
            <person name="Trumbower H."/>
            <person name="Weirauch M."/>
            <person name="Cooper D.N."/>
            <person name="Stenson P.D."/>
            <person name="Ma B."/>
            <person name="Brent M."/>
            <person name="Arumugam M."/>
            <person name="Shteynberg D."/>
            <person name="Copley R.R."/>
            <person name="Taylor M.S."/>
            <person name="Riethman H."/>
            <person name="Mudunuri U."/>
            <person name="Peterson J."/>
            <person name="Guyer M."/>
            <person name="Felsenfeld A."/>
            <person name="Old S."/>
            <person name="Mockrin S."/>
            <person name="Collins F.S."/>
        </authorList>
    </citation>
    <scope>NUCLEOTIDE SEQUENCE [LARGE SCALE GENOMIC DNA]</scope>
    <source>
        <strain>Brown Norway</strain>
    </source>
</reference>
<reference key="2">
    <citation type="journal article" date="2008" name="Dev. Dyn.">
        <title>Expression of the diaphanous-related formin proteins mDia1 and mDia2 in the rat testis.</title>
        <authorList>
            <person name="Mironova E."/>
            <person name="Millette C.F."/>
        </authorList>
    </citation>
    <scope>SUBCELLULAR LOCATION</scope>
    <scope>TISSUE SPECIFICITY</scope>
</reference>
<accession>F1LVW7</accession>
<accession>A0A0G2K8Y4</accession>
<protein>
    <recommendedName>
        <fullName>Protein diaphanous homolog 3</fullName>
    </recommendedName>
    <alternativeName>
        <fullName>Diaphanous-related formin-3</fullName>
        <shortName>DRF3</shortName>
    </alternativeName>
    <alternativeName>
        <fullName evidence="9">mDIA2</fullName>
    </alternativeName>
</protein>
<dbReference type="EMBL" id="AABR07018707">
    <property type="status" value="NOT_ANNOTATED_CDS"/>
    <property type="molecule type" value="Genomic_DNA"/>
</dbReference>
<dbReference type="EMBL" id="AABR07018708">
    <property type="status" value="NOT_ANNOTATED_CDS"/>
    <property type="molecule type" value="Genomic_DNA"/>
</dbReference>
<dbReference type="EMBL" id="AABR07018709">
    <property type="status" value="NOT_ANNOTATED_CDS"/>
    <property type="molecule type" value="Genomic_DNA"/>
</dbReference>
<dbReference type="EMBL" id="AABR07018710">
    <property type="status" value="NOT_ANNOTATED_CDS"/>
    <property type="molecule type" value="Genomic_DNA"/>
</dbReference>
<dbReference type="EMBL" id="AABR07018711">
    <property type="status" value="NOT_ANNOTATED_CDS"/>
    <property type="molecule type" value="Genomic_DNA"/>
</dbReference>
<dbReference type="EMBL" id="AABR07018712">
    <property type="status" value="NOT_ANNOTATED_CDS"/>
    <property type="molecule type" value="Genomic_DNA"/>
</dbReference>
<dbReference type="EMBL" id="AABR07018713">
    <property type="status" value="NOT_ANNOTATED_CDS"/>
    <property type="molecule type" value="Genomic_DNA"/>
</dbReference>
<dbReference type="RefSeq" id="NP_001292101.1">
    <property type="nucleotide sequence ID" value="NM_001305172.1"/>
</dbReference>
<dbReference type="RefSeq" id="XP_063130229.1">
    <property type="nucleotide sequence ID" value="XM_063274159.1"/>
</dbReference>
<dbReference type="SMR" id="F1LVW7"/>
<dbReference type="FunCoup" id="F1LVW7">
    <property type="interactions" value="891"/>
</dbReference>
<dbReference type="STRING" id="10116.ENSRNOP00000012167"/>
<dbReference type="PhosphoSitePlus" id="F1LVW7"/>
<dbReference type="PaxDb" id="10116-ENSRNOP00000012167"/>
<dbReference type="PeptideAtlas" id="F1LVW7"/>
<dbReference type="GeneID" id="290396"/>
<dbReference type="KEGG" id="rno:290396"/>
<dbReference type="AGR" id="RGD:1593287"/>
<dbReference type="CTD" id="81624"/>
<dbReference type="RGD" id="1593287">
    <property type="gene designation" value="Diaph3"/>
</dbReference>
<dbReference type="eggNOG" id="KOG1924">
    <property type="taxonomic scope" value="Eukaryota"/>
</dbReference>
<dbReference type="HOGENOM" id="CLU_002356_0_0_1"/>
<dbReference type="InParanoid" id="F1LVW7"/>
<dbReference type="OrthoDB" id="56639at9989"/>
<dbReference type="TreeFam" id="TF315383"/>
<dbReference type="Reactome" id="R-RNO-5663220">
    <property type="pathway name" value="RHO GTPases Activate Formins"/>
</dbReference>
<dbReference type="Reactome" id="R-RNO-8980692">
    <property type="pathway name" value="RHOA GTPase cycle"/>
</dbReference>
<dbReference type="Reactome" id="R-RNO-9013026">
    <property type="pathway name" value="RHOB GTPase cycle"/>
</dbReference>
<dbReference type="Reactome" id="R-RNO-9013149">
    <property type="pathway name" value="RAC1 GTPase cycle"/>
</dbReference>
<dbReference type="Reactome" id="R-RNO-9013404">
    <property type="pathway name" value="RAC2 GTPase cycle"/>
</dbReference>
<dbReference type="Reactome" id="R-RNO-9013405">
    <property type="pathway name" value="RHOD GTPase cycle"/>
</dbReference>
<dbReference type="Reactome" id="R-RNO-9013406">
    <property type="pathway name" value="RHOQ GTPase cycle"/>
</dbReference>
<dbReference type="Reactome" id="R-RNO-9013408">
    <property type="pathway name" value="RHOG GTPase cycle"/>
</dbReference>
<dbReference type="Reactome" id="R-RNO-9035034">
    <property type="pathway name" value="RHOF GTPase cycle"/>
</dbReference>
<dbReference type="PRO" id="PR:F1LVW7"/>
<dbReference type="Proteomes" id="UP000002494">
    <property type="component" value="Unplaced"/>
</dbReference>
<dbReference type="GO" id="GO:0005884">
    <property type="term" value="C:actin filament"/>
    <property type="evidence" value="ECO:0000318"/>
    <property type="project" value="GO_Central"/>
</dbReference>
<dbReference type="GO" id="GO:0032432">
    <property type="term" value="C:actin filament bundle"/>
    <property type="evidence" value="ECO:0000266"/>
    <property type="project" value="RGD"/>
</dbReference>
<dbReference type="GO" id="GO:0032154">
    <property type="term" value="C:cleavage furrow"/>
    <property type="evidence" value="ECO:0000266"/>
    <property type="project" value="RGD"/>
</dbReference>
<dbReference type="GO" id="GO:0005737">
    <property type="term" value="C:cytoplasm"/>
    <property type="evidence" value="ECO:0000266"/>
    <property type="project" value="RGD"/>
</dbReference>
<dbReference type="GO" id="GO:0000813">
    <property type="term" value="C:ESCRT I complex"/>
    <property type="evidence" value="ECO:0000266"/>
    <property type="project" value="RGD"/>
</dbReference>
<dbReference type="GO" id="GO:0031941">
    <property type="term" value="C:filamentous actin"/>
    <property type="evidence" value="ECO:0000266"/>
    <property type="project" value="RGD"/>
</dbReference>
<dbReference type="GO" id="GO:0005815">
    <property type="term" value="C:microtubule organizing center"/>
    <property type="evidence" value="ECO:0000266"/>
    <property type="project" value="RGD"/>
</dbReference>
<dbReference type="GO" id="GO:0005634">
    <property type="term" value="C:nucleus"/>
    <property type="evidence" value="ECO:0000266"/>
    <property type="project" value="RGD"/>
</dbReference>
<dbReference type="GO" id="GO:0097470">
    <property type="term" value="C:ribbon synapse"/>
    <property type="evidence" value="ECO:0000266"/>
    <property type="project" value="RGD"/>
</dbReference>
<dbReference type="GO" id="GO:0000922">
    <property type="term" value="C:spindle pole"/>
    <property type="evidence" value="ECO:0000266"/>
    <property type="project" value="RGD"/>
</dbReference>
<dbReference type="GO" id="GO:1990427">
    <property type="term" value="C:stereocilia tip-link density"/>
    <property type="evidence" value="ECO:0000266"/>
    <property type="project" value="RGD"/>
</dbReference>
<dbReference type="GO" id="GO:0003779">
    <property type="term" value="F:actin binding"/>
    <property type="evidence" value="ECO:0000266"/>
    <property type="project" value="RGD"/>
</dbReference>
<dbReference type="GO" id="GO:0008092">
    <property type="term" value="F:cytoskeletal protein binding"/>
    <property type="evidence" value="ECO:0000266"/>
    <property type="project" value="RGD"/>
</dbReference>
<dbReference type="GO" id="GO:0008017">
    <property type="term" value="F:microtubule binding"/>
    <property type="evidence" value="ECO:0000266"/>
    <property type="project" value="RGD"/>
</dbReference>
<dbReference type="GO" id="GO:0042803">
    <property type="term" value="F:protein homodimerization activity"/>
    <property type="evidence" value="ECO:0000266"/>
    <property type="project" value="RGD"/>
</dbReference>
<dbReference type="GO" id="GO:0031267">
    <property type="term" value="F:small GTPase binding"/>
    <property type="evidence" value="ECO:0007669"/>
    <property type="project" value="InterPro"/>
</dbReference>
<dbReference type="GO" id="GO:0051764">
    <property type="term" value="P:actin crosslink formation"/>
    <property type="evidence" value="ECO:0000266"/>
    <property type="project" value="RGD"/>
</dbReference>
<dbReference type="GO" id="GO:0030036">
    <property type="term" value="P:actin cytoskeleton organization"/>
    <property type="evidence" value="ECO:0000250"/>
    <property type="project" value="UniProtKB"/>
</dbReference>
<dbReference type="GO" id="GO:0051017">
    <property type="term" value="P:actin filament bundle assembly"/>
    <property type="evidence" value="ECO:0000266"/>
    <property type="project" value="RGD"/>
</dbReference>
<dbReference type="GO" id="GO:0007015">
    <property type="term" value="P:actin filament organization"/>
    <property type="evidence" value="ECO:0000266"/>
    <property type="project" value="RGD"/>
</dbReference>
<dbReference type="GO" id="GO:0030041">
    <property type="term" value="P:actin filament polymerization"/>
    <property type="evidence" value="ECO:0000250"/>
    <property type="project" value="UniProtKB"/>
</dbReference>
<dbReference type="GO" id="GO:0045010">
    <property type="term" value="P:actin nucleation"/>
    <property type="evidence" value="ECO:0000266"/>
    <property type="project" value="RGD"/>
</dbReference>
<dbReference type="GO" id="GO:0061909">
    <property type="term" value="P:autophagosome-lysosome fusion"/>
    <property type="evidence" value="ECO:0000266"/>
    <property type="project" value="RGD"/>
</dbReference>
<dbReference type="GO" id="GO:0030030">
    <property type="term" value="P:cell projection organization"/>
    <property type="evidence" value="ECO:0000266"/>
    <property type="project" value="RGD"/>
</dbReference>
<dbReference type="GO" id="GO:0007059">
    <property type="term" value="P:chromosome segregation"/>
    <property type="evidence" value="ECO:0000266"/>
    <property type="project" value="RGD"/>
</dbReference>
<dbReference type="GO" id="GO:0007010">
    <property type="term" value="P:cytoskeleton organization"/>
    <property type="evidence" value="ECO:0000250"/>
    <property type="project" value="UniProtKB"/>
</dbReference>
<dbReference type="GO" id="GO:0016197">
    <property type="term" value="P:endosomal transport"/>
    <property type="evidence" value="ECO:0000266"/>
    <property type="project" value="RGD"/>
</dbReference>
<dbReference type="GO" id="GO:0030218">
    <property type="term" value="P:erythrocyte differentiation"/>
    <property type="evidence" value="ECO:0000266"/>
    <property type="project" value="RGD"/>
</dbReference>
<dbReference type="GO" id="GO:0043131">
    <property type="term" value="P:erythrocyte enucleation"/>
    <property type="evidence" value="ECO:0000266"/>
    <property type="project" value="RGD"/>
</dbReference>
<dbReference type="GO" id="GO:0030010">
    <property type="term" value="P:establishment of cell polarity"/>
    <property type="evidence" value="ECO:0000266"/>
    <property type="project" value="RGD"/>
</dbReference>
<dbReference type="GO" id="GO:0010467">
    <property type="term" value="P:gene expression"/>
    <property type="evidence" value="ECO:0000266"/>
    <property type="project" value="RGD"/>
</dbReference>
<dbReference type="GO" id="GO:0060322">
    <property type="term" value="P:head development"/>
    <property type="evidence" value="ECO:0000266"/>
    <property type="project" value="RGD"/>
</dbReference>
<dbReference type="GO" id="GO:0001701">
    <property type="term" value="P:in utero embryonic development"/>
    <property type="evidence" value="ECO:0000266"/>
    <property type="project" value="RGD"/>
</dbReference>
<dbReference type="GO" id="GO:0060113">
    <property type="term" value="P:inner ear receptor cell differentiation"/>
    <property type="evidence" value="ECO:0000266"/>
    <property type="project" value="RGD"/>
</dbReference>
<dbReference type="GO" id="GO:0007229">
    <property type="term" value="P:integrin-mediated signaling pathway"/>
    <property type="evidence" value="ECO:0000266"/>
    <property type="project" value="RGD"/>
</dbReference>
<dbReference type="GO" id="GO:0030225">
    <property type="term" value="P:macrophage differentiation"/>
    <property type="evidence" value="ECO:0000266"/>
    <property type="project" value="RGD"/>
</dbReference>
<dbReference type="GO" id="GO:0000226">
    <property type="term" value="P:microtubule cytoskeleton organization"/>
    <property type="evidence" value="ECO:0000266"/>
    <property type="project" value="RGD"/>
</dbReference>
<dbReference type="GO" id="GO:0046785">
    <property type="term" value="P:microtubule polymerization"/>
    <property type="evidence" value="ECO:0000266"/>
    <property type="project" value="RGD"/>
</dbReference>
<dbReference type="GO" id="GO:0007026">
    <property type="term" value="P:negative regulation of microtubule depolymerization"/>
    <property type="evidence" value="ECO:0000266"/>
    <property type="project" value="RGD"/>
</dbReference>
<dbReference type="GO" id="GO:0030182">
    <property type="term" value="P:neuron differentiation"/>
    <property type="evidence" value="ECO:0000266"/>
    <property type="project" value="RGD"/>
</dbReference>
<dbReference type="GO" id="GO:0071800">
    <property type="term" value="P:podosome assembly"/>
    <property type="evidence" value="ECO:0000266"/>
    <property type="project" value="RGD"/>
</dbReference>
<dbReference type="GO" id="GO:0034367">
    <property type="term" value="P:protein-containing complex remodeling"/>
    <property type="evidence" value="ECO:0000266"/>
    <property type="project" value="RGD"/>
</dbReference>
<dbReference type="GO" id="GO:0007605">
    <property type="term" value="P:sensory perception of sound"/>
    <property type="evidence" value="ECO:0000266"/>
    <property type="project" value="RGD"/>
</dbReference>
<dbReference type="GO" id="GO:0007283">
    <property type="term" value="P:spermatogenesis"/>
    <property type="evidence" value="ECO:0000270"/>
    <property type="project" value="RGD"/>
</dbReference>
<dbReference type="FunFam" id="1.20.58.630:FF:000001">
    <property type="entry name" value="Diaphanous related formin 1"/>
    <property type="match status" value="1"/>
</dbReference>
<dbReference type="FunFam" id="1.25.10.10:FF:000033">
    <property type="entry name" value="Diaphanous related formin 2"/>
    <property type="match status" value="1"/>
</dbReference>
<dbReference type="FunFam" id="1.20.58.2220:FF:000003">
    <property type="entry name" value="protein diaphanous homolog 1 isoform X2"/>
    <property type="match status" value="1"/>
</dbReference>
<dbReference type="FunFam" id="1.10.238.150:FF:000002">
    <property type="entry name" value="protein diaphanous homolog 2 isoform X2"/>
    <property type="match status" value="1"/>
</dbReference>
<dbReference type="Gene3D" id="1.20.58.630">
    <property type="match status" value="1"/>
</dbReference>
<dbReference type="Gene3D" id="6.10.30.30">
    <property type="match status" value="1"/>
</dbReference>
<dbReference type="Gene3D" id="1.10.20.40">
    <property type="entry name" value="Formin, diaphanous GTPase-binding domain"/>
    <property type="match status" value="1"/>
</dbReference>
<dbReference type="Gene3D" id="1.20.58.2220">
    <property type="entry name" value="Formin, FH2 domain"/>
    <property type="match status" value="1"/>
</dbReference>
<dbReference type="Gene3D" id="1.10.238.150">
    <property type="entry name" value="Formin, FH3 diaphanous domain"/>
    <property type="match status" value="1"/>
</dbReference>
<dbReference type="Gene3D" id="1.25.10.10">
    <property type="entry name" value="Leucine-rich Repeat Variant"/>
    <property type="match status" value="1"/>
</dbReference>
<dbReference type="InterPro" id="IPR011989">
    <property type="entry name" value="ARM-like"/>
</dbReference>
<dbReference type="InterPro" id="IPR016024">
    <property type="entry name" value="ARM-type_fold"/>
</dbReference>
<dbReference type="InterPro" id="IPR014767">
    <property type="entry name" value="DAD_dom"/>
</dbReference>
<dbReference type="InterPro" id="IPR044933">
    <property type="entry name" value="DIA_GBD_sf"/>
</dbReference>
<dbReference type="InterPro" id="IPR010465">
    <property type="entry name" value="Drf_DAD"/>
</dbReference>
<dbReference type="InterPro" id="IPR015425">
    <property type="entry name" value="FH2_Formin"/>
</dbReference>
<dbReference type="InterPro" id="IPR042201">
    <property type="entry name" value="FH2_Formin_sf"/>
</dbReference>
<dbReference type="InterPro" id="IPR010472">
    <property type="entry name" value="FH3_dom"/>
</dbReference>
<dbReference type="InterPro" id="IPR051412">
    <property type="entry name" value="Formin_Homology_Diaphanous_sf"/>
</dbReference>
<dbReference type="InterPro" id="IPR014768">
    <property type="entry name" value="GBD/FH3_dom"/>
</dbReference>
<dbReference type="InterPro" id="IPR010473">
    <property type="entry name" value="GTPase-bd"/>
</dbReference>
<dbReference type="PANTHER" id="PTHR45691">
    <property type="entry name" value="PROTEIN DIAPHANOUS"/>
    <property type="match status" value="1"/>
</dbReference>
<dbReference type="PANTHER" id="PTHR45691:SF9">
    <property type="entry name" value="PROTEIN DIAPHANOUS HOMOLOG 3"/>
    <property type="match status" value="1"/>
</dbReference>
<dbReference type="Pfam" id="PF06345">
    <property type="entry name" value="Drf_DAD"/>
    <property type="match status" value="1"/>
</dbReference>
<dbReference type="Pfam" id="PF06367">
    <property type="entry name" value="Drf_FH3"/>
    <property type="match status" value="1"/>
</dbReference>
<dbReference type="Pfam" id="PF06371">
    <property type="entry name" value="Drf_GBD"/>
    <property type="match status" value="1"/>
</dbReference>
<dbReference type="Pfam" id="PF02181">
    <property type="entry name" value="FH2"/>
    <property type="match status" value="1"/>
</dbReference>
<dbReference type="SMART" id="SM01139">
    <property type="entry name" value="Drf_FH3"/>
    <property type="match status" value="1"/>
</dbReference>
<dbReference type="SMART" id="SM01140">
    <property type="entry name" value="Drf_GBD"/>
    <property type="match status" value="1"/>
</dbReference>
<dbReference type="SMART" id="SM00498">
    <property type="entry name" value="FH2"/>
    <property type="match status" value="1"/>
</dbReference>
<dbReference type="SUPFAM" id="SSF48371">
    <property type="entry name" value="ARM repeat"/>
    <property type="match status" value="1"/>
</dbReference>
<dbReference type="SUPFAM" id="SSF101447">
    <property type="entry name" value="Formin homology 2 domain (FH2 domain)"/>
    <property type="match status" value="1"/>
</dbReference>
<dbReference type="PROSITE" id="PS51231">
    <property type="entry name" value="DAD"/>
    <property type="match status" value="1"/>
</dbReference>
<dbReference type="PROSITE" id="PS51444">
    <property type="entry name" value="FH2"/>
    <property type="match status" value="1"/>
</dbReference>
<dbReference type="PROSITE" id="PS51232">
    <property type="entry name" value="GBD_FH3"/>
    <property type="match status" value="1"/>
</dbReference>
<name>DIAP3_RAT</name>
<organism>
    <name type="scientific">Rattus norvegicus</name>
    <name type="common">Rat</name>
    <dbReference type="NCBI Taxonomy" id="10116"/>
    <lineage>
        <taxon>Eukaryota</taxon>
        <taxon>Metazoa</taxon>
        <taxon>Chordata</taxon>
        <taxon>Craniata</taxon>
        <taxon>Vertebrata</taxon>
        <taxon>Euteleostomi</taxon>
        <taxon>Mammalia</taxon>
        <taxon>Eutheria</taxon>
        <taxon>Euarchontoglires</taxon>
        <taxon>Glires</taxon>
        <taxon>Rodentia</taxon>
        <taxon>Myomorpha</taxon>
        <taxon>Muroidea</taxon>
        <taxon>Muridae</taxon>
        <taxon>Murinae</taxon>
        <taxon>Rattus</taxon>
    </lineage>
</organism>
<evidence type="ECO:0000250" key="1">
    <source>
        <dbReference type="UniProtKB" id="Q9NSV4"/>
    </source>
</evidence>
<evidence type="ECO:0000250" key="2">
    <source>
        <dbReference type="UniProtKB" id="Q9Z207"/>
    </source>
</evidence>
<evidence type="ECO:0000255" key="3"/>
<evidence type="ECO:0000255" key="4">
    <source>
        <dbReference type="PROSITE-ProRule" id="PRU00577"/>
    </source>
</evidence>
<evidence type="ECO:0000255" key="5">
    <source>
        <dbReference type="PROSITE-ProRule" id="PRU00579"/>
    </source>
</evidence>
<evidence type="ECO:0000255" key="6">
    <source>
        <dbReference type="PROSITE-ProRule" id="PRU00774"/>
    </source>
</evidence>
<evidence type="ECO:0000256" key="7">
    <source>
        <dbReference type="SAM" id="MobiDB-lite"/>
    </source>
</evidence>
<evidence type="ECO:0000269" key="8">
    <source>
    </source>
</evidence>
<evidence type="ECO:0000303" key="9">
    <source>
    </source>
</evidence>
<evidence type="ECO:0000305" key="10"/>
<evidence type="ECO:0000312" key="11">
    <source>
        <dbReference type="RGD" id="1593287"/>
    </source>
</evidence>
<sequence length="1172" mass="133833">MEKHRARALGRDSKASRRKGLPSAPPAGPYELGEKRPKLHLNIRTLTDDMLDKFASIRIPKGSKKERPPLPQLKTVSGSSDYSSVSSETMENNPKSLSENEVLKLFEKMMEDMNLNEDKKAPLREKDFSIKKEMVMQYINTASKTGSLRSSRQISPQEFIHELKMGYTGERLFTYLESLRVSLTSNPVSWVQNFGHEGLGLLLDILEKLINGQIQEKVVKKTQHKVIQCLRALMNTQYGLERIMSDERSLSLLAKAMDPKQPSMMADVVKLLSAVCIVGEESILEEVLEALTSAGEERKIDRFFSIVEGLRHNSVQLQVACMQLINALVTSPDDLDFRLHLRNEFMRCGLKEILPNLKGIKNDGLDIQLKVFDEHKEEDLSEFSHRFEDIRAEFDEASDVYSVVWDTVKETRAEGHFVSILQHLLLIRNDRFIRQQYFKLIDECVSQIVLHRDGIDPDFTYRKRLDLDLSQFVDVCIDQAKLEEWEEKASEHCKKFEKECTDHQETQAQLQKKEAKINELQAELQAFKSQFGALPPGTKIPLQTSAKGEPGPSAFPPAPPALGAGVPPPPPPPPPPPPPLPGMAMPFGGPVPPPPPLGFLGGQNFIPLNLPFGLKPKKEFKPEISMRRLNWLKIGPNEMSENCFWIKVNENKYENKDLLCKLENTFCCLEKEKRDTNDFDEKKVIKKRMKELKFLDPKIAQNLSIFLSSFRVPYEKIRTMILEVDEAQLSESMIQNLMKHLPDEEQLKSLSQFRSDYNSLCEPEQFAVVMSNVKRLRPRLTAILFKLQFEEQVNNINPDIMAVSTACEEIKKSKSFSKLLELVLLMGNYMNAGSRNAQTFGFDLSSLCKLKDTKSADQKTTLLHFLVDVCEEKHPDILPFVDDLAHLDKASRVSVEMLEKSLKQMGRQLLQLEKNLETFPPPEDLHDKFVIKMSSFIITAKEHYGKLSTLLDNMTQLYQSVMSYYAVDTKKVSVEEFFNDLNNFRTSFMQALKENIRKREAAEKEKRARIAKERAEKERLERQQEKKRLLEMKTEGDETGVMDSLLEALQSGAAFRDRRKRTPKLKDIRQSLSPMSQRPVLKVCNHENQKMQLSEGSRPHHSINCTSTRTPVAKELNCNLDTHTSTGRIKAVEKEACNAESNRKKEMELLGSVSKSESVPEVEALLARLRAL</sequence>
<comment type="function">
    <text evidence="2">Actin nucleation and elongation factor required for the assembly of F-actin structures, such as actin cables and stress fibers. Required for cytokinesis, stress fiber formation and transcriptional activation of the serum response factor. Binds to GTP-bound form of Rho and to profilin: acts in a Rho-dependent manner to recruit profilin to the membrane, where it promotes actin polymerization. DFR proteins couple Rho and Src tyrosine kinase during signaling and the regulation of actin dynamics. Also acts as an actin nucleation and elongation factor in the nucleus by promoting nuclear actin polymerization inside the nucleus to drive serum-dependent SRF-MRTFA activity.</text>
</comment>
<comment type="subcellular location">
    <subcellularLocation>
        <location evidence="8">Cytoplasm</location>
    </subcellularLocation>
    <subcellularLocation>
        <location evidence="8">Nucleus</location>
    </subcellularLocation>
    <text evidence="1 2">During mitosis, co-localizes with the actin-rich cleavage furrow and with the microtubule-rich central spindle during cytokinesis (By similarity). Shuttles between the cytoplasm and the nucleus (By similarity).</text>
</comment>
<comment type="tissue specificity">
    <text evidence="8">Expressed in testis (PubMed:18651670). Present in Sertoli cells (at protein level) (PubMed:18651670).</text>
</comment>
<comment type="domain">
    <text evidence="2">The DAD domain regulates activation via by an autoinhibitory interaction with the GBD/FH3 domain. This autoinhibition is released upon competitive binding of an activated GTPase. The release of DAD allows the FH2 domain to then nucleate and elongate nonbranched actin filaments.</text>
</comment>
<comment type="PTM">
    <text evidence="2">Ubiquitinated.</text>
</comment>
<comment type="similarity">
    <text evidence="10">Belongs to the formin homology family. Diaphanous subfamily.</text>
</comment>